<protein>
    <recommendedName>
        <fullName evidence="1">Glycerol kinase</fullName>
        <ecNumber evidence="1">2.7.1.30</ecNumber>
    </recommendedName>
    <alternativeName>
        <fullName evidence="1">ATP:glycerol 3-phosphotransferase</fullName>
    </alternativeName>
    <alternativeName>
        <fullName evidence="1">Glycerokinase</fullName>
        <shortName evidence="1">GK</shortName>
    </alternativeName>
</protein>
<proteinExistence type="inferred from homology"/>
<comment type="function">
    <text evidence="1">Key enzyme in the regulation of glycerol uptake and metabolism. Catalyzes the phosphorylation of glycerol to yield sn-glycerol 3-phosphate.</text>
</comment>
<comment type="catalytic activity">
    <reaction evidence="1">
        <text>glycerol + ATP = sn-glycerol 3-phosphate + ADP + H(+)</text>
        <dbReference type="Rhea" id="RHEA:21644"/>
        <dbReference type="ChEBI" id="CHEBI:15378"/>
        <dbReference type="ChEBI" id="CHEBI:17754"/>
        <dbReference type="ChEBI" id="CHEBI:30616"/>
        <dbReference type="ChEBI" id="CHEBI:57597"/>
        <dbReference type="ChEBI" id="CHEBI:456216"/>
        <dbReference type="EC" id="2.7.1.30"/>
    </reaction>
</comment>
<comment type="activity regulation">
    <text evidence="1">Inhibited by fructose 1,6-bisphosphate (FBP).</text>
</comment>
<comment type="pathway">
    <text evidence="1">Polyol metabolism; glycerol degradation via glycerol kinase pathway; sn-glycerol 3-phosphate from glycerol: step 1/1.</text>
</comment>
<comment type="similarity">
    <text evidence="1">Belongs to the FGGY kinase family.</text>
</comment>
<dbReference type="EC" id="2.7.1.30" evidence="1"/>
<dbReference type="EMBL" id="BA000031">
    <property type="protein sequence ID" value="BAC60649.1"/>
    <property type="molecule type" value="Genomic_DNA"/>
</dbReference>
<dbReference type="RefSeq" id="NP_798765.1">
    <property type="nucleotide sequence ID" value="NC_004603.1"/>
</dbReference>
<dbReference type="RefSeq" id="WP_005456578.1">
    <property type="nucleotide sequence ID" value="NC_004603.1"/>
</dbReference>
<dbReference type="SMR" id="Q87M72"/>
<dbReference type="GeneID" id="1189899"/>
<dbReference type="KEGG" id="vpa:VP2386"/>
<dbReference type="PATRIC" id="fig|223926.6.peg.2288"/>
<dbReference type="eggNOG" id="COG0554">
    <property type="taxonomic scope" value="Bacteria"/>
</dbReference>
<dbReference type="HOGENOM" id="CLU_009281_2_3_6"/>
<dbReference type="UniPathway" id="UPA00618">
    <property type="reaction ID" value="UER00672"/>
</dbReference>
<dbReference type="Proteomes" id="UP000002493">
    <property type="component" value="Chromosome 1"/>
</dbReference>
<dbReference type="GO" id="GO:0005829">
    <property type="term" value="C:cytosol"/>
    <property type="evidence" value="ECO:0007669"/>
    <property type="project" value="TreeGrafter"/>
</dbReference>
<dbReference type="GO" id="GO:0005524">
    <property type="term" value="F:ATP binding"/>
    <property type="evidence" value="ECO:0007669"/>
    <property type="project" value="UniProtKB-UniRule"/>
</dbReference>
<dbReference type="GO" id="GO:0004370">
    <property type="term" value="F:glycerol kinase activity"/>
    <property type="evidence" value="ECO:0000250"/>
    <property type="project" value="UniProtKB"/>
</dbReference>
<dbReference type="GO" id="GO:0019563">
    <property type="term" value="P:glycerol catabolic process"/>
    <property type="evidence" value="ECO:0007669"/>
    <property type="project" value="UniProtKB-UniRule"/>
</dbReference>
<dbReference type="GO" id="GO:0006071">
    <property type="term" value="P:glycerol metabolic process"/>
    <property type="evidence" value="ECO:0000250"/>
    <property type="project" value="UniProtKB"/>
</dbReference>
<dbReference type="GO" id="GO:0006072">
    <property type="term" value="P:glycerol-3-phosphate metabolic process"/>
    <property type="evidence" value="ECO:0007669"/>
    <property type="project" value="InterPro"/>
</dbReference>
<dbReference type="CDD" id="cd07786">
    <property type="entry name" value="FGGY_EcGK_like"/>
    <property type="match status" value="1"/>
</dbReference>
<dbReference type="FunFam" id="3.30.420.40:FF:000007">
    <property type="entry name" value="Glycerol kinase"/>
    <property type="match status" value="1"/>
</dbReference>
<dbReference type="FunFam" id="3.30.420.40:FF:000008">
    <property type="entry name" value="Glycerol kinase"/>
    <property type="match status" value="1"/>
</dbReference>
<dbReference type="Gene3D" id="3.30.420.40">
    <property type="match status" value="2"/>
</dbReference>
<dbReference type="HAMAP" id="MF_00186">
    <property type="entry name" value="Glycerol_kin"/>
    <property type="match status" value="1"/>
</dbReference>
<dbReference type="InterPro" id="IPR043129">
    <property type="entry name" value="ATPase_NBD"/>
</dbReference>
<dbReference type="InterPro" id="IPR000577">
    <property type="entry name" value="Carb_kinase_FGGY"/>
</dbReference>
<dbReference type="InterPro" id="IPR018483">
    <property type="entry name" value="Carb_kinase_FGGY_CS"/>
</dbReference>
<dbReference type="InterPro" id="IPR018485">
    <property type="entry name" value="FGGY_C"/>
</dbReference>
<dbReference type="InterPro" id="IPR018484">
    <property type="entry name" value="FGGY_N"/>
</dbReference>
<dbReference type="InterPro" id="IPR005999">
    <property type="entry name" value="Glycerol_kin"/>
</dbReference>
<dbReference type="NCBIfam" id="TIGR01311">
    <property type="entry name" value="glycerol_kin"/>
    <property type="match status" value="1"/>
</dbReference>
<dbReference type="NCBIfam" id="NF000756">
    <property type="entry name" value="PRK00047.1"/>
    <property type="match status" value="1"/>
</dbReference>
<dbReference type="PANTHER" id="PTHR10196:SF69">
    <property type="entry name" value="GLYCEROL KINASE"/>
    <property type="match status" value="1"/>
</dbReference>
<dbReference type="PANTHER" id="PTHR10196">
    <property type="entry name" value="SUGAR KINASE"/>
    <property type="match status" value="1"/>
</dbReference>
<dbReference type="Pfam" id="PF02782">
    <property type="entry name" value="FGGY_C"/>
    <property type="match status" value="1"/>
</dbReference>
<dbReference type="Pfam" id="PF00370">
    <property type="entry name" value="FGGY_N"/>
    <property type="match status" value="1"/>
</dbReference>
<dbReference type="PIRSF" id="PIRSF000538">
    <property type="entry name" value="GlpK"/>
    <property type="match status" value="1"/>
</dbReference>
<dbReference type="SUPFAM" id="SSF53067">
    <property type="entry name" value="Actin-like ATPase domain"/>
    <property type="match status" value="2"/>
</dbReference>
<dbReference type="PROSITE" id="PS00933">
    <property type="entry name" value="FGGY_KINASES_1"/>
    <property type="match status" value="1"/>
</dbReference>
<dbReference type="PROSITE" id="PS00445">
    <property type="entry name" value="FGGY_KINASES_2"/>
    <property type="match status" value="1"/>
</dbReference>
<accession>Q87M72</accession>
<gene>
    <name evidence="1" type="primary">glpK</name>
    <name type="ordered locus">VP2386</name>
</gene>
<keyword id="KW-0067">ATP-binding</keyword>
<keyword id="KW-0319">Glycerol metabolism</keyword>
<keyword id="KW-0418">Kinase</keyword>
<keyword id="KW-0547">Nucleotide-binding</keyword>
<keyword id="KW-0808">Transferase</keyword>
<feature type="chain" id="PRO_0000059519" description="Glycerol kinase">
    <location>
        <begin position="1"/>
        <end position="505"/>
    </location>
</feature>
<feature type="binding site" evidence="1">
    <location>
        <position position="14"/>
    </location>
    <ligand>
        <name>ADP</name>
        <dbReference type="ChEBI" id="CHEBI:456216"/>
    </ligand>
</feature>
<feature type="binding site" evidence="1">
    <location>
        <position position="14"/>
    </location>
    <ligand>
        <name>ATP</name>
        <dbReference type="ChEBI" id="CHEBI:30616"/>
    </ligand>
</feature>
<feature type="binding site" evidence="1">
    <location>
        <position position="14"/>
    </location>
    <ligand>
        <name>sn-glycerol 3-phosphate</name>
        <dbReference type="ChEBI" id="CHEBI:57597"/>
    </ligand>
</feature>
<feature type="binding site" evidence="1">
    <location>
        <position position="15"/>
    </location>
    <ligand>
        <name>ATP</name>
        <dbReference type="ChEBI" id="CHEBI:30616"/>
    </ligand>
</feature>
<feature type="binding site" evidence="1">
    <location>
        <position position="16"/>
    </location>
    <ligand>
        <name>ATP</name>
        <dbReference type="ChEBI" id="CHEBI:30616"/>
    </ligand>
</feature>
<feature type="binding site" evidence="1">
    <location>
        <position position="18"/>
    </location>
    <ligand>
        <name>ADP</name>
        <dbReference type="ChEBI" id="CHEBI:456216"/>
    </ligand>
</feature>
<feature type="binding site" evidence="1">
    <location>
        <position position="84"/>
    </location>
    <ligand>
        <name>glycerol</name>
        <dbReference type="ChEBI" id="CHEBI:17754"/>
    </ligand>
</feature>
<feature type="binding site" evidence="1">
    <location>
        <position position="84"/>
    </location>
    <ligand>
        <name>sn-glycerol 3-phosphate</name>
        <dbReference type="ChEBI" id="CHEBI:57597"/>
    </ligand>
</feature>
<feature type="binding site" evidence="1">
    <location>
        <position position="85"/>
    </location>
    <ligand>
        <name>glycerol</name>
        <dbReference type="ChEBI" id="CHEBI:17754"/>
    </ligand>
</feature>
<feature type="binding site" evidence="1">
    <location>
        <position position="85"/>
    </location>
    <ligand>
        <name>sn-glycerol 3-phosphate</name>
        <dbReference type="ChEBI" id="CHEBI:57597"/>
    </ligand>
</feature>
<feature type="binding site" evidence="1">
    <location>
        <position position="136"/>
    </location>
    <ligand>
        <name>glycerol</name>
        <dbReference type="ChEBI" id="CHEBI:17754"/>
    </ligand>
</feature>
<feature type="binding site" evidence="1">
    <location>
        <position position="136"/>
    </location>
    <ligand>
        <name>sn-glycerol 3-phosphate</name>
        <dbReference type="ChEBI" id="CHEBI:57597"/>
    </ligand>
</feature>
<feature type="binding site" evidence="1">
    <location>
        <position position="246"/>
    </location>
    <ligand>
        <name>glycerol</name>
        <dbReference type="ChEBI" id="CHEBI:17754"/>
    </ligand>
</feature>
<feature type="binding site" evidence="1">
    <location>
        <position position="246"/>
    </location>
    <ligand>
        <name>sn-glycerol 3-phosphate</name>
        <dbReference type="ChEBI" id="CHEBI:57597"/>
    </ligand>
</feature>
<feature type="binding site" evidence="1">
    <location>
        <position position="247"/>
    </location>
    <ligand>
        <name>glycerol</name>
        <dbReference type="ChEBI" id="CHEBI:17754"/>
    </ligand>
</feature>
<feature type="binding site" evidence="1">
    <location>
        <position position="268"/>
    </location>
    <ligand>
        <name>ADP</name>
        <dbReference type="ChEBI" id="CHEBI:456216"/>
    </ligand>
</feature>
<feature type="binding site" evidence="1">
    <location>
        <position position="268"/>
    </location>
    <ligand>
        <name>ATP</name>
        <dbReference type="ChEBI" id="CHEBI:30616"/>
    </ligand>
</feature>
<feature type="binding site" evidence="1">
    <location>
        <position position="311"/>
    </location>
    <ligand>
        <name>ADP</name>
        <dbReference type="ChEBI" id="CHEBI:456216"/>
    </ligand>
</feature>
<feature type="binding site" evidence="1">
    <location>
        <position position="311"/>
    </location>
    <ligand>
        <name>ATP</name>
        <dbReference type="ChEBI" id="CHEBI:30616"/>
    </ligand>
</feature>
<feature type="binding site" evidence="1">
    <location>
        <position position="315"/>
    </location>
    <ligand>
        <name>ATP</name>
        <dbReference type="ChEBI" id="CHEBI:30616"/>
    </ligand>
</feature>
<feature type="binding site" evidence="1">
    <location>
        <position position="412"/>
    </location>
    <ligand>
        <name>ADP</name>
        <dbReference type="ChEBI" id="CHEBI:456216"/>
    </ligand>
</feature>
<feature type="binding site" evidence="1">
    <location>
        <position position="412"/>
    </location>
    <ligand>
        <name>ATP</name>
        <dbReference type="ChEBI" id="CHEBI:30616"/>
    </ligand>
</feature>
<feature type="binding site" evidence="1">
    <location>
        <position position="416"/>
    </location>
    <ligand>
        <name>ADP</name>
        <dbReference type="ChEBI" id="CHEBI:456216"/>
    </ligand>
</feature>
<sequence length="505" mass="55682">MTEQKYIVALDQGTTSSRAVILDHDANIVSVAQREFTQIYPQAGWVEHDPMEIWATQSSTLVEALAKSGIRSDQLAAIGITNQRETTIVWNKETGKPVYNAIVWQCRRTADICEDLKSRGLEDYVRDNTGLVLDPYFSGTKVKWILDNVEGAREDAEAGKLLFGTVDTWLVWKMTQGRVHVTDYTNASRTMLFNINDLCWDQKLLDEMGIPASMMPEVKRSSEIYGKTNIGGKGGTRIPIAGIAGDQQAALYGQMCVEAGQAKNTYGTGCFLLMNTGQEKVTSKNGLLTTLACGPKGEPAYALEGAVFMGGASIQWLRDELKILNGAEDSEYFATKVDTSNGVYVVPAFTGLGAPYWDAYARGTIVGLTRGVNSNHIIRATLEGIAYQTRDVLDAMQADSGIKLANLRVDGGAVANNFLMQFQSDVLNTEVHRPQVTEVTALGAAYLAGLAVGYWNSIDELQDKAVLDRTFEPHDDEEKRNRRYKGWKRAVKCAQTWSELHDEDD</sequence>
<name>GLPK_VIBPA</name>
<organism>
    <name type="scientific">Vibrio parahaemolyticus serotype O3:K6 (strain RIMD 2210633)</name>
    <dbReference type="NCBI Taxonomy" id="223926"/>
    <lineage>
        <taxon>Bacteria</taxon>
        <taxon>Pseudomonadati</taxon>
        <taxon>Pseudomonadota</taxon>
        <taxon>Gammaproteobacteria</taxon>
        <taxon>Vibrionales</taxon>
        <taxon>Vibrionaceae</taxon>
        <taxon>Vibrio</taxon>
    </lineage>
</organism>
<reference key="1">
    <citation type="journal article" date="2003" name="Lancet">
        <title>Genome sequence of Vibrio parahaemolyticus: a pathogenic mechanism distinct from that of V. cholerae.</title>
        <authorList>
            <person name="Makino K."/>
            <person name="Oshima K."/>
            <person name="Kurokawa K."/>
            <person name="Yokoyama K."/>
            <person name="Uda T."/>
            <person name="Tagomori K."/>
            <person name="Iijima Y."/>
            <person name="Najima M."/>
            <person name="Nakano M."/>
            <person name="Yamashita A."/>
            <person name="Kubota Y."/>
            <person name="Kimura S."/>
            <person name="Yasunaga T."/>
            <person name="Honda T."/>
            <person name="Shinagawa H."/>
            <person name="Hattori M."/>
            <person name="Iida T."/>
        </authorList>
    </citation>
    <scope>NUCLEOTIDE SEQUENCE [LARGE SCALE GENOMIC DNA]</scope>
    <source>
        <strain>RIMD 2210633</strain>
    </source>
</reference>
<evidence type="ECO:0000255" key="1">
    <source>
        <dbReference type="HAMAP-Rule" id="MF_00186"/>
    </source>
</evidence>